<organism>
    <name type="scientific">Stutzerimonas stutzeri (strain A1501)</name>
    <name type="common">Pseudomonas stutzeri</name>
    <dbReference type="NCBI Taxonomy" id="379731"/>
    <lineage>
        <taxon>Bacteria</taxon>
        <taxon>Pseudomonadati</taxon>
        <taxon>Pseudomonadota</taxon>
        <taxon>Gammaproteobacteria</taxon>
        <taxon>Pseudomonadales</taxon>
        <taxon>Pseudomonadaceae</taxon>
        <taxon>Stutzerimonas</taxon>
    </lineage>
</organism>
<comment type="function">
    <text evidence="1">The RuvA-RuvB-RuvC complex processes Holliday junction (HJ) DNA during genetic recombination and DNA repair, while the RuvA-RuvB complex plays an important role in the rescue of blocked DNA replication forks via replication fork reversal (RFR). RuvA specifically binds to HJ cruciform DNA, conferring on it an open structure. The RuvB hexamer acts as an ATP-dependent pump, pulling dsDNA into and through the RuvAB complex. RuvB forms 2 homohexamers on either side of HJ DNA bound by 1 or 2 RuvA tetramers; 4 subunits per hexamer contact DNA at a time. Coordinated motions by a converter formed by DNA-disengaged RuvB subunits stimulates ATP hydrolysis and nucleotide exchange. Immobilization of the converter enables RuvB to convert the ATP-contained energy into a lever motion, pulling 2 nucleotides of DNA out of the RuvA tetramer per ATP hydrolyzed, thus driving DNA branch migration. The RuvB motors rotate together with the DNA substrate, which together with the progressing nucleotide cycle form the mechanistic basis for DNA recombination by continuous HJ branch migration. Branch migration allows RuvC to scan DNA until it finds its consensus sequence, where it cleaves and resolves cruciform DNA.</text>
</comment>
<comment type="catalytic activity">
    <reaction evidence="1">
        <text>ATP + H2O = ADP + phosphate + H(+)</text>
        <dbReference type="Rhea" id="RHEA:13065"/>
        <dbReference type="ChEBI" id="CHEBI:15377"/>
        <dbReference type="ChEBI" id="CHEBI:15378"/>
        <dbReference type="ChEBI" id="CHEBI:30616"/>
        <dbReference type="ChEBI" id="CHEBI:43474"/>
        <dbReference type="ChEBI" id="CHEBI:456216"/>
    </reaction>
</comment>
<comment type="subunit">
    <text evidence="1">Homohexamer. Forms an RuvA(8)-RuvB(12)-Holliday junction (HJ) complex. HJ DNA is sandwiched between 2 RuvA tetramers; dsDNA enters through RuvA and exits via RuvB. An RuvB hexamer assembles on each DNA strand where it exits the tetramer. Each RuvB hexamer is contacted by two RuvA subunits (via domain III) on 2 adjacent RuvB subunits; this complex drives branch migration. In the full resolvosome a probable DNA-RuvA(4)-RuvB(12)-RuvC(2) complex forms which resolves the HJ.</text>
</comment>
<comment type="subcellular location">
    <subcellularLocation>
        <location evidence="1">Cytoplasm</location>
    </subcellularLocation>
</comment>
<comment type="domain">
    <text evidence="1">Has 3 domains, the large (RuvB-L) and small ATPase (RuvB-S) domains and the C-terminal head (RuvB-H) domain. The head domain binds DNA, while the ATPase domains jointly bind ATP, ADP or are empty depending on the state of the subunit in the translocation cycle. During a single DNA translocation step the structure of each domain remains the same, but their relative positions change.</text>
</comment>
<comment type="similarity">
    <text evidence="1">Belongs to the RuvB family.</text>
</comment>
<name>RUVB_STUS1</name>
<gene>
    <name evidence="1" type="primary">ruvB</name>
    <name type="ordered locus">PST_2808</name>
</gene>
<reference key="1">
    <citation type="journal article" date="2008" name="Proc. Natl. Acad. Sci. U.S.A.">
        <title>Nitrogen fixation island and rhizosphere competence traits in the genome of root-associated Pseudomonas stutzeri A1501.</title>
        <authorList>
            <person name="Yan Y."/>
            <person name="Yang J."/>
            <person name="Dou Y."/>
            <person name="Chen M."/>
            <person name="Ping S."/>
            <person name="Peng J."/>
            <person name="Lu W."/>
            <person name="Zhang W."/>
            <person name="Yao Z."/>
            <person name="Li H."/>
            <person name="Liu W."/>
            <person name="He S."/>
            <person name="Geng L."/>
            <person name="Zhang X."/>
            <person name="Yang F."/>
            <person name="Yu H."/>
            <person name="Zhan Y."/>
            <person name="Li D."/>
            <person name="Lin Z."/>
            <person name="Wang Y."/>
            <person name="Elmerich C."/>
            <person name="Lin M."/>
            <person name="Jin Q."/>
        </authorList>
    </citation>
    <scope>NUCLEOTIDE SEQUENCE [LARGE SCALE GENOMIC DNA]</scope>
    <source>
        <strain>A1501</strain>
    </source>
</reference>
<dbReference type="EC" id="3.6.4.-" evidence="1"/>
<dbReference type="EMBL" id="CP000304">
    <property type="protein sequence ID" value="ABP80454.1"/>
    <property type="molecule type" value="Genomic_DNA"/>
</dbReference>
<dbReference type="RefSeq" id="WP_011913911.1">
    <property type="nucleotide sequence ID" value="NC_009434.1"/>
</dbReference>
<dbReference type="SMR" id="A4VNA3"/>
<dbReference type="GeneID" id="66822130"/>
<dbReference type="KEGG" id="psa:PST_2808"/>
<dbReference type="eggNOG" id="COG2255">
    <property type="taxonomic scope" value="Bacteria"/>
</dbReference>
<dbReference type="HOGENOM" id="CLU_055599_1_0_6"/>
<dbReference type="Proteomes" id="UP000000233">
    <property type="component" value="Chromosome"/>
</dbReference>
<dbReference type="GO" id="GO:0005737">
    <property type="term" value="C:cytoplasm"/>
    <property type="evidence" value="ECO:0007669"/>
    <property type="project" value="UniProtKB-SubCell"/>
</dbReference>
<dbReference type="GO" id="GO:0048476">
    <property type="term" value="C:Holliday junction resolvase complex"/>
    <property type="evidence" value="ECO:0007669"/>
    <property type="project" value="UniProtKB-UniRule"/>
</dbReference>
<dbReference type="GO" id="GO:0005524">
    <property type="term" value="F:ATP binding"/>
    <property type="evidence" value="ECO:0007669"/>
    <property type="project" value="UniProtKB-UniRule"/>
</dbReference>
<dbReference type="GO" id="GO:0016887">
    <property type="term" value="F:ATP hydrolysis activity"/>
    <property type="evidence" value="ECO:0007669"/>
    <property type="project" value="InterPro"/>
</dbReference>
<dbReference type="GO" id="GO:0000400">
    <property type="term" value="F:four-way junction DNA binding"/>
    <property type="evidence" value="ECO:0007669"/>
    <property type="project" value="UniProtKB-UniRule"/>
</dbReference>
<dbReference type="GO" id="GO:0009378">
    <property type="term" value="F:four-way junction helicase activity"/>
    <property type="evidence" value="ECO:0007669"/>
    <property type="project" value="InterPro"/>
</dbReference>
<dbReference type="GO" id="GO:0006310">
    <property type="term" value="P:DNA recombination"/>
    <property type="evidence" value="ECO:0007669"/>
    <property type="project" value="UniProtKB-UniRule"/>
</dbReference>
<dbReference type="GO" id="GO:0006281">
    <property type="term" value="P:DNA repair"/>
    <property type="evidence" value="ECO:0007669"/>
    <property type="project" value="UniProtKB-UniRule"/>
</dbReference>
<dbReference type="CDD" id="cd00009">
    <property type="entry name" value="AAA"/>
    <property type="match status" value="1"/>
</dbReference>
<dbReference type="FunFam" id="1.10.10.10:FF:000086">
    <property type="entry name" value="Holliday junction ATP-dependent DNA helicase RuvB"/>
    <property type="match status" value="1"/>
</dbReference>
<dbReference type="FunFam" id="1.10.8.60:FF:000023">
    <property type="entry name" value="Holliday junction ATP-dependent DNA helicase RuvB"/>
    <property type="match status" value="1"/>
</dbReference>
<dbReference type="FunFam" id="3.40.50.300:FF:000073">
    <property type="entry name" value="Holliday junction ATP-dependent DNA helicase RuvB"/>
    <property type="match status" value="1"/>
</dbReference>
<dbReference type="Gene3D" id="1.10.8.60">
    <property type="match status" value="1"/>
</dbReference>
<dbReference type="Gene3D" id="3.40.50.300">
    <property type="entry name" value="P-loop containing nucleotide triphosphate hydrolases"/>
    <property type="match status" value="1"/>
</dbReference>
<dbReference type="Gene3D" id="1.10.10.10">
    <property type="entry name" value="Winged helix-like DNA-binding domain superfamily/Winged helix DNA-binding domain"/>
    <property type="match status" value="1"/>
</dbReference>
<dbReference type="HAMAP" id="MF_00016">
    <property type="entry name" value="DNA_HJ_migration_RuvB"/>
    <property type="match status" value="1"/>
</dbReference>
<dbReference type="InterPro" id="IPR003593">
    <property type="entry name" value="AAA+_ATPase"/>
</dbReference>
<dbReference type="InterPro" id="IPR041445">
    <property type="entry name" value="AAA_lid_4"/>
</dbReference>
<dbReference type="InterPro" id="IPR004605">
    <property type="entry name" value="DNA_helicase_Holl-junc_RuvB"/>
</dbReference>
<dbReference type="InterPro" id="IPR027417">
    <property type="entry name" value="P-loop_NTPase"/>
</dbReference>
<dbReference type="InterPro" id="IPR008824">
    <property type="entry name" value="RuvB-like_N"/>
</dbReference>
<dbReference type="InterPro" id="IPR008823">
    <property type="entry name" value="RuvB_C"/>
</dbReference>
<dbReference type="InterPro" id="IPR036388">
    <property type="entry name" value="WH-like_DNA-bd_sf"/>
</dbReference>
<dbReference type="InterPro" id="IPR036390">
    <property type="entry name" value="WH_DNA-bd_sf"/>
</dbReference>
<dbReference type="NCBIfam" id="NF000868">
    <property type="entry name" value="PRK00080.1"/>
    <property type="match status" value="1"/>
</dbReference>
<dbReference type="NCBIfam" id="TIGR00635">
    <property type="entry name" value="ruvB"/>
    <property type="match status" value="1"/>
</dbReference>
<dbReference type="PANTHER" id="PTHR42848">
    <property type="match status" value="1"/>
</dbReference>
<dbReference type="PANTHER" id="PTHR42848:SF1">
    <property type="entry name" value="HOLLIDAY JUNCTION BRANCH MIGRATION COMPLEX SUBUNIT RUVB"/>
    <property type="match status" value="1"/>
</dbReference>
<dbReference type="Pfam" id="PF17864">
    <property type="entry name" value="AAA_lid_4"/>
    <property type="match status" value="1"/>
</dbReference>
<dbReference type="Pfam" id="PF05491">
    <property type="entry name" value="RuvB_C"/>
    <property type="match status" value="1"/>
</dbReference>
<dbReference type="Pfam" id="PF05496">
    <property type="entry name" value="RuvB_N"/>
    <property type="match status" value="1"/>
</dbReference>
<dbReference type="SMART" id="SM00382">
    <property type="entry name" value="AAA"/>
    <property type="match status" value="1"/>
</dbReference>
<dbReference type="SUPFAM" id="SSF52540">
    <property type="entry name" value="P-loop containing nucleoside triphosphate hydrolases"/>
    <property type="match status" value="1"/>
</dbReference>
<dbReference type="SUPFAM" id="SSF46785">
    <property type="entry name" value="Winged helix' DNA-binding domain"/>
    <property type="match status" value="1"/>
</dbReference>
<sequence length="350" mass="39013">MIEADRIVTASSRDRDEQLDRAIRPLKLAEYIGQPVVREQMDLFIRAAKGRQEALDHTLIFGPPGLGKTTLANIIAEEMGVSIKSTSGPVLERPGDLAALLTNLEAGDVLFVDEIHRLSPIVEEVLYPAMEDFQLDIMIGEGPAARSIKLDLPPFTLVGATTRAGMLTNPLRDRFGIVQRLEFYSTEDLATIVRRSAGILGLPTEPEGAFEIARRARGTPRIANRLLRRVRDFAQVRGKGEITRQIADLALNMLDVDERGFDHQDRRLLLTLIEKFDGGPVGIDSLAAAISEERHTIEDVLEPYLIQQGYIMRTPRGRVVTRHAYLHFGLNLPKRMNEPPTPDLFEGDIV</sequence>
<proteinExistence type="inferred from homology"/>
<feature type="chain" id="PRO_1000001451" description="Holliday junction branch migration complex subunit RuvB">
    <location>
        <begin position="1"/>
        <end position="350"/>
    </location>
</feature>
<feature type="region of interest" description="Large ATPase domain (RuvB-L)" evidence="1">
    <location>
        <begin position="4"/>
        <end position="184"/>
    </location>
</feature>
<feature type="region of interest" description="Small ATPAse domain (RuvB-S)" evidence="1">
    <location>
        <begin position="185"/>
        <end position="255"/>
    </location>
</feature>
<feature type="region of interest" description="Head domain (RuvB-H)" evidence="1">
    <location>
        <begin position="258"/>
        <end position="350"/>
    </location>
</feature>
<feature type="binding site" evidence="1">
    <location>
        <position position="23"/>
    </location>
    <ligand>
        <name>ATP</name>
        <dbReference type="ChEBI" id="CHEBI:30616"/>
    </ligand>
</feature>
<feature type="binding site" evidence="1">
    <location>
        <position position="24"/>
    </location>
    <ligand>
        <name>ATP</name>
        <dbReference type="ChEBI" id="CHEBI:30616"/>
    </ligand>
</feature>
<feature type="binding site" evidence="1">
    <location>
        <position position="65"/>
    </location>
    <ligand>
        <name>ATP</name>
        <dbReference type="ChEBI" id="CHEBI:30616"/>
    </ligand>
</feature>
<feature type="binding site" evidence="1">
    <location>
        <position position="68"/>
    </location>
    <ligand>
        <name>ATP</name>
        <dbReference type="ChEBI" id="CHEBI:30616"/>
    </ligand>
</feature>
<feature type="binding site" evidence="1">
    <location>
        <position position="69"/>
    </location>
    <ligand>
        <name>ATP</name>
        <dbReference type="ChEBI" id="CHEBI:30616"/>
    </ligand>
</feature>
<feature type="binding site" evidence="1">
    <location>
        <position position="69"/>
    </location>
    <ligand>
        <name>Mg(2+)</name>
        <dbReference type="ChEBI" id="CHEBI:18420"/>
    </ligand>
</feature>
<feature type="binding site" evidence="1">
    <location>
        <position position="70"/>
    </location>
    <ligand>
        <name>ATP</name>
        <dbReference type="ChEBI" id="CHEBI:30616"/>
    </ligand>
</feature>
<feature type="binding site" evidence="1">
    <location>
        <begin position="131"/>
        <end position="133"/>
    </location>
    <ligand>
        <name>ATP</name>
        <dbReference type="ChEBI" id="CHEBI:30616"/>
    </ligand>
</feature>
<feature type="binding site" evidence="1">
    <location>
        <position position="174"/>
    </location>
    <ligand>
        <name>ATP</name>
        <dbReference type="ChEBI" id="CHEBI:30616"/>
    </ligand>
</feature>
<feature type="binding site" evidence="1">
    <location>
        <position position="184"/>
    </location>
    <ligand>
        <name>ATP</name>
        <dbReference type="ChEBI" id="CHEBI:30616"/>
    </ligand>
</feature>
<feature type="binding site" evidence="1">
    <location>
        <position position="221"/>
    </location>
    <ligand>
        <name>ATP</name>
        <dbReference type="ChEBI" id="CHEBI:30616"/>
    </ligand>
</feature>
<feature type="binding site" evidence="1">
    <location>
        <position position="294"/>
    </location>
    <ligand>
        <name>DNA</name>
        <dbReference type="ChEBI" id="CHEBI:16991"/>
    </ligand>
</feature>
<feature type="binding site" evidence="1">
    <location>
        <position position="313"/>
    </location>
    <ligand>
        <name>DNA</name>
        <dbReference type="ChEBI" id="CHEBI:16991"/>
    </ligand>
</feature>
<feature type="binding site" evidence="1">
    <location>
        <position position="318"/>
    </location>
    <ligand>
        <name>DNA</name>
        <dbReference type="ChEBI" id="CHEBI:16991"/>
    </ligand>
</feature>
<protein>
    <recommendedName>
        <fullName evidence="1">Holliday junction branch migration complex subunit RuvB</fullName>
        <ecNumber evidence="1">3.6.4.-</ecNumber>
    </recommendedName>
</protein>
<evidence type="ECO:0000255" key="1">
    <source>
        <dbReference type="HAMAP-Rule" id="MF_00016"/>
    </source>
</evidence>
<accession>A4VNA3</accession>
<keyword id="KW-0067">ATP-binding</keyword>
<keyword id="KW-0963">Cytoplasm</keyword>
<keyword id="KW-0227">DNA damage</keyword>
<keyword id="KW-0233">DNA recombination</keyword>
<keyword id="KW-0234">DNA repair</keyword>
<keyword id="KW-0238">DNA-binding</keyword>
<keyword id="KW-0378">Hydrolase</keyword>
<keyword id="KW-0547">Nucleotide-binding</keyword>
<keyword id="KW-1185">Reference proteome</keyword>